<name>EFP_WIGBR</name>
<evidence type="ECO:0000255" key="1">
    <source>
        <dbReference type="HAMAP-Rule" id="MF_00141"/>
    </source>
</evidence>
<accession>Q8D2R7</accession>
<gene>
    <name evidence="1" type="primary">efp</name>
    <name type="ordered locus">WIGBR2870</name>
</gene>
<reference key="1">
    <citation type="journal article" date="2002" name="Nat. Genet.">
        <title>Genome sequence of the endocellular obligate symbiont of tsetse flies, Wigglesworthia glossinidia.</title>
        <authorList>
            <person name="Akman L."/>
            <person name="Yamashita A."/>
            <person name="Watanabe H."/>
            <person name="Oshima K."/>
            <person name="Shiba T."/>
            <person name="Hattori M."/>
            <person name="Aksoy S."/>
        </authorList>
    </citation>
    <scope>NUCLEOTIDE SEQUENCE [LARGE SCALE GENOMIC DNA]</scope>
</reference>
<sequence>MIIYYSANQSKSGLKILLKNEPCLILENQFVKPGKGQPFNRIKIKKLISGKIFTKIFKSNEKLIYADVLDVKVKSLYKDKKYWNFIKKENFEQFKISKKNLGEKYKWIIEQLECIVTFWDENPINITLPRFVDIKVCNANFDIKGDTIKSGNKYIILTTGAIIKAPIFIRSEEIVRVDTNLGEYVSRIK</sequence>
<protein>
    <recommendedName>
        <fullName evidence="1">Elongation factor P</fullName>
        <shortName evidence="1">EF-P</shortName>
    </recommendedName>
</protein>
<organism>
    <name type="scientific">Wigglesworthia glossinidia brevipalpis</name>
    <dbReference type="NCBI Taxonomy" id="36870"/>
    <lineage>
        <taxon>Bacteria</taxon>
        <taxon>Pseudomonadati</taxon>
        <taxon>Pseudomonadota</taxon>
        <taxon>Gammaproteobacteria</taxon>
        <taxon>Enterobacterales</taxon>
        <taxon>Erwiniaceae</taxon>
        <taxon>Wigglesworthia</taxon>
    </lineage>
</organism>
<feature type="chain" id="PRO_0000094369" description="Elongation factor P">
    <location>
        <begin position="1"/>
        <end position="189"/>
    </location>
</feature>
<feature type="modified residue" description="N6-(3,6-diaminohexanoyl)-5-hydroxylysine" evidence="1">
    <location>
        <position position="35"/>
    </location>
</feature>
<proteinExistence type="inferred from homology"/>
<comment type="function">
    <text evidence="1">Involved in peptide bond synthesis. Alleviates ribosome stalling that occurs when 3 or more consecutive Pro residues or the sequence PPG is present in a protein, possibly by augmenting the peptidyl transferase activity of the ribosome. Modification of Lys-35 is required for alleviation.</text>
</comment>
<comment type="pathway">
    <text evidence="1">Protein biosynthesis; polypeptide chain elongation.</text>
</comment>
<comment type="subcellular location">
    <subcellularLocation>
        <location evidence="1">Cytoplasm</location>
    </subcellularLocation>
</comment>
<comment type="PTM">
    <text evidence="1">May be beta-lysylated on the epsilon-amino group of Lys-35 by the combined action of EpmA and EpmB, and then hydroxylated on the C5 position of the same residue by EpmC (if this protein is present). Lysylation is critical for the stimulatory effect of EF-P on peptide-bond formation. The lysylation moiety may extend toward the peptidyltransferase center and stabilize the terminal 3-CCA end of the tRNA. Hydroxylation of the C5 position on Lys-35 may allow additional potential stabilizing hydrogen-bond interactions with the P-tRNA.</text>
</comment>
<comment type="similarity">
    <text evidence="1">Belongs to the elongation factor P family.</text>
</comment>
<dbReference type="EMBL" id="BA000021">
    <property type="protein sequence ID" value="BAC24433.1"/>
    <property type="molecule type" value="Genomic_DNA"/>
</dbReference>
<dbReference type="SMR" id="Q8D2R7"/>
<dbReference type="STRING" id="36870.gene:10368780"/>
<dbReference type="KEGG" id="wbr:efp"/>
<dbReference type="eggNOG" id="COG0231">
    <property type="taxonomic scope" value="Bacteria"/>
</dbReference>
<dbReference type="HOGENOM" id="CLU_074944_0_0_6"/>
<dbReference type="OrthoDB" id="9801844at2"/>
<dbReference type="UniPathway" id="UPA00345"/>
<dbReference type="Proteomes" id="UP000000562">
    <property type="component" value="Chromosome"/>
</dbReference>
<dbReference type="GO" id="GO:0005737">
    <property type="term" value="C:cytoplasm"/>
    <property type="evidence" value="ECO:0007669"/>
    <property type="project" value="UniProtKB-SubCell"/>
</dbReference>
<dbReference type="GO" id="GO:0003746">
    <property type="term" value="F:translation elongation factor activity"/>
    <property type="evidence" value="ECO:0007669"/>
    <property type="project" value="UniProtKB-UniRule"/>
</dbReference>
<dbReference type="GO" id="GO:0043043">
    <property type="term" value="P:peptide biosynthetic process"/>
    <property type="evidence" value="ECO:0007669"/>
    <property type="project" value="InterPro"/>
</dbReference>
<dbReference type="CDD" id="cd04470">
    <property type="entry name" value="S1_EF-P_repeat_1"/>
    <property type="match status" value="1"/>
</dbReference>
<dbReference type="CDD" id="cd05794">
    <property type="entry name" value="S1_EF-P_repeat_2"/>
    <property type="match status" value="1"/>
</dbReference>
<dbReference type="FunFam" id="2.30.30.30:FF:000003">
    <property type="entry name" value="Elongation factor P"/>
    <property type="match status" value="1"/>
</dbReference>
<dbReference type="FunFam" id="2.40.50.140:FF:000004">
    <property type="entry name" value="Elongation factor P"/>
    <property type="match status" value="1"/>
</dbReference>
<dbReference type="FunFam" id="2.40.50.140:FF:000009">
    <property type="entry name" value="Elongation factor P"/>
    <property type="match status" value="1"/>
</dbReference>
<dbReference type="Gene3D" id="2.30.30.30">
    <property type="match status" value="1"/>
</dbReference>
<dbReference type="Gene3D" id="2.40.50.140">
    <property type="entry name" value="Nucleic acid-binding proteins"/>
    <property type="match status" value="2"/>
</dbReference>
<dbReference type="HAMAP" id="MF_00141">
    <property type="entry name" value="EF_P"/>
    <property type="match status" value="1"/>
</dbReference>
<dbReference type="InterPro" id="IPR015365">
    <property type="entry name" value="Elong-fact-P_C"/>
</dbReference>
<dbReference type="InterPro" id="IPR012340">
    <property type="entry name" value="NA-bd_OB-fold"/>
</dbReference>
<dbReference type="InterPro" id="IPR014722">
    <property type="entry name" value="Rib_uL2_dom2"/>
</dbReference>
<dbReference type="InterPro" id="IPR020599">
    <property type="entry name" value="Transl_elong_fac_P/YeiP"/>
</dbReference>
<dbReference type="InterPro" id="IPR013185">
    <property type="entry name" value="Transl_elong_KOW-like"/>
</dbReference>
<dbReference type="InterPro" id="IPR001059">
    <property type="entry name" value="Transl_elong_P/YeiP_cen"/>
</dbReference>
<dbReference type="InterPro" id="IPR011768">
    <property type="entry name" value="Transl_elongation_fac_P"/>
</dbReference>
<dbReference type="InterPro" id="IPR008991">
    <property type="entry name" value="Translation_prot_SH3-like_sf"/>
</dbReference>
<dbReference type="NCBIfam" id="TIGR00038">
    <property type="entry name" value="efp"/>
    <property type="match status" value="1"/>
</dbReference>
<dbReference type="NCBIfam" id="NF001810">
    <property type="entry name" value="PRK00529.1"/>
    <property type="match status" value="1"/>
</dbReference>
<dbReference type="PANTHER" id="PTHR30053">
    <property type="entry name" value="ELONGATION FACTOR P"/>
    <property type="match status" value="1"/>
</dbReference>
<dbReference type="PANTHER" id="PTHR30053:SF12">
    <property type="entry name" value="ELONGATION FACTOR P (EF-P) FAMILY PROTEIN"/>
    <property type="match status" value="1"/>
</dbReference>
<dbReference type="Pfam" id="PF01132">
    <property type="entry name" value="EFP"/>
    <property type="match status" value="1"/>
</dbReference>
<dbReference type="Pfam" id="PF08207">
    <property type="entry name" value="EFP_N"/>
    <property type="match status" value="1"/>
</dbReference>
<dbReference type="Pfam" id="PF09285">
    <property type="entry name" value="Elong-fact-P_C"/>
    <property type="match status" value="1"/>
</dbReference>
<dbReference type="PIRSF" id="PIRSF005901">
    <property type="entry name" value="EF-P"/>
    <property type="match status" value="1"/>
</dbReference>
<dbReference type="SMART" id="SM01185">
    <property type="entry name" value="EFP"/>
    <property type="match status" value="1"/>
</dbReference>
<dbReference type="SMART" id="SM00841">
    <property type="entry name" value="Elong-fact-P_C"/>
    <property type="match status" value="1"/>
</dbReference>
<dbReference type="SUPFAM" id="SSF50249">
    <property type="entry name" value="Nucleic acid-binding proteins"/>
    <property type="match status" value="2"/>
</dbReference>
<dbReference type="SUPFAM" id="SSF50104">
    <property type="entry name" value="Translation proteins SH3-like domain"/>
    <property type="match status" value="1"/>
</dbReference>
<keyword id="KW-0963">Cytoplasm</keyword>
<keyword id="KW-0251">Elongation factor</keyword>
<keyword id="KW-0379">Hydroxylation</keyword>
<keyword id="KW-0648">Protein biosynthesis</keyword>
<keyword id="KW-1185">Reference proteome</keyword>